<proteinExistence type="inferred from homology"/>
<gene>
    <name evidence="1" type="primary">dnaJ</name>
    <name type="ordered locus">ECDH10B_0015</name>
</gene>
<keyword id="KW-0143">Chaperone</keyword>
<keyword id="KW-0963">Cytoplasm</keyword>
<keyword id="KW-0235">DNA replication</keyword>
<keyword id="KW-0479">Metal-binding</keyword>
<keyword id="KW-0677">Repeat</keyword>
<keyword id="KW-0346">Stress response</keyword>
<keyword id="KW-0862">Zinc</keyword>
<keyword id="KW-0863">Zinc-finger</keyword>
<comment type="function">
    <text evidence="1">Participates actively in the response to hyperosmotic and heat shock by preventing the aggregation of stress-denatured proteins and by disaggregating proteins, also in an autonomous, DnaK-independent fashion. Unfolded proteins bind initially to DnaJ; upon interaction with the DnaJ-bound protein, DnaK hydrolyzes its bound ATP, resulting in the formation of a stable complex. GrpE releases ADP from DnaK; ATP binding to DnaK triggers the release of the substrate protein, thus completing the reaction cycle. Several rounds of ATP-dependent interactions between DnaJ, DnaK and GrpE are required for fully efficient folding. Also involved, together with DnaK and GrpE, in the DNA replication of plasmids through activation of initiation proteins.</text>
</comment>
<comment type="cofactor">
    <cofactor evidence="1">
        <name>Zn(2+)</name>
        <dbReference type="ChEBI" id="CHEBI:29105"/>
    </cofactor>
    <text evidence="1">Binds 2 Zn(2+) ions per monomer.</text>
</comment>
<comment type="subunit">
    <text evidence="1">Homodimer.</text>
</comment>
<comment type="subcellular location">
    <subcellularLocation>
        <location evidence="1">Cytoplasm</location>
    </subcellularLocation>
</comment>
<comment type="domain">
    <text evidence="1">The J domain is necessary and sufficient to stimulate DnaK ATPase activity. Zinc center 1 plays an important role in the autonomous, DnaK-independent chaperone activity of DnaJ. Zinc center 2 is essential for interaction with DnaK and for DnaJ activity.</text>
</comment>
<comment type="similarity">
    <text evidence="1">Belongs to the DnaJ family.</text>
</comment>
<name>DNAJ_ECODH</name>
<sequence length="376" mass="41100">MAKQDYYEILGVSKTAEEREIRKAYKRLAMKYHPDRNQGDKEAEAKFKEIKEAYEVLTDSQKRAAYDQYGHAAFEQGGMGGGGFGGGADFSDIFGDVFGDIFGGGRGRQRAARGADLRYNMELTLEEAVRGVTKEIRIPTLEECDVCHGSGAKPGTQPQTCPTCHGSGQVQMRQGFFAVQQTCPHCQGRGTLIKDPCNKCHGHGRVERSKTLSVKIPAGVDTGDRIRLAGEGEAGEHGAPAGDLYVQVQVKQHPIFEREGNNLYCEVPINFAMAALGGEIEVPTLDGRVKLKVPGETQTGKLFRMRGKGVKSVRGGAQGDLLCRVVVETPVGLNERQKQLLQELQESFGGPTGEHNSPRSKSFFDGVKKFFDDLTR</sequence>
<organism>
    <name type="scientific">Escherichia coli (strain K12 / DH10B)</name>
    <dbReference type="NCBI Taxonomy" id="316385"/>
    <lineage>
        <taxon>Bacteria</taxon>
        <taxon>Pseudomonadati</taxon>
        <taxon>Pseudomonadota</taxon>
        <taxon>Gammaproteobacteria</taxon>
        <taxon>Enterobacterales</taxon>
        <taxon>Enterobacteriaceae</taxon>
        <taxon>Escherichia</taxon>
    </lineage>
</organism>
<dbReference type="EMBL" id="CP000948">
    <property type="protein sequence ID" value="ACB01220.1"/>
    <property type="molecule type" value="Genomic_DNA"/>
</dbReference>
<dbReference type="RefSeq" id="WP_001118476.1">
    <property type="nucleotide sequence ID" value="NC_010473.1"/>
</dbReference>
<dbReference type="BMRB" id="B1XBE0"/>
<dbReference type="SMR" id="B1XBE0"/>
<dbReference type="KEGG" id="ecd:ECDH10B_0015"/>
<dbReference type="HOGENOM" id="CLU_017633_0_7_6"/>
<dbReference type="GO" id="GO:0005737">
    <property type="term" value="C:cytoplasm"/>
    <property type="evidence" value="ECO:0007669"/>
    <property type="project" value="UniProtKB-SubCell"/>
</dbReference>
<dbReference type="GO" id="GO:0005524">
    <property type="term" value="F:ATP binding"/>
    <property type="evidence" value="ECO:0007669"/>
    <property type="project" value="InterPro"/>
</dbReference>
<dbReference type="GO" id="GO:0031072">
    <property type="term" value="F:heat shock protein binding"/>
    <property type="evidence" value="ECO:0007669"/>
    <property type="project" value="InterPro"/>
</dbReference>
<dbReference type="GO" id="GO:0051082">
    <property type="term" value="F:unfolded protein binding"/>
    <property type="evidence" value="ECO:0007669"/>
    <property type="project" value="UniProtKB-UniRule"/>
</dbReference>
<dbReference type="GO" id="GO:0008270">
    <property type="term" value="F:zinc ion binding"/>
    <property type="evidence" value="ECO:0007669"/>
    <property type="project" value="UniProtKB-UniRule"/>
</dbReference>
<dbReference type="GO" id="GO:0051085">
    <property type="term" value="P:chaperone cofactor-dependent protein refolding"/>
    <property type="evidence" value="ECO:0007669"/>
    <property type="project" value="TreeGrafter"/>
</dbReference>
<dbReference type="GO" id="GO:0006260">
    <property type="term" value="P:DNA replication"/>
    <property type="evidence" value="ECO:0007669"/>
    <property type="project" value="UniProtKB-KW"/>
</dbReference>
<dbReference type="GO" id="GO:0042026">
    <property type="term" value="P:protein refolding"/>
    <property type="evidence" value="ECO:0007669"/>
    <property type="project" value="TreeGrafter"/>
</dbReference>
<dbReference type="GO" id="GO:0009408">
    <property type="term" value="P:response to heat"/>
    <property type="evidence" value="ECO:0007669"/>
    <property type="project" value="InterPro"/>
</dbReference>
<dbReference type="CDD" id="cd06257">
    <property type="entry name" value="DnaJ"/>
    <property type="match status" value="1"/>
</dbReference>
<dbReference type="CDD" id="cd10747">
    <property type="entry name" value="DnaJ_C"/>
    <property type="match status" value="1"/>
</dbReference>
<dbReference type="CDD" id="cd10719">
    <property type="entry name" value="DnaJ_zf"/>
    <property type="match status" value="1"/>
</dbReference>
<dbReference type="FunFam" id="1.10.287.110:FF:000003">
    <property type="entry name" value="Molecular chaperone DnaJ"/>
    <property type="match status" value="1"/>
</dbReference>
<dbReference type="FunFam" id="2.10.230.10:FF:000002">
    <property type="entry name" value="Molecular chaperone DnaJ"/>
    <property type="match status" value="1"/>
</dbReference>
<dbReference type="FunFam" id="2.60.260.20:FF:000004">
    <property type="entry name" value="Molecular chaperone DnaJ"/>
    <property type="match status" value="1"/>
</dbReference>
<dbReference type="Gene3D" id="1.10.287.110">
    <property type="entry name" value="DnaJ domain"/>
    <property type="match status" value="1"/>
</dbReference>
<dbReference type="Gene3D" id="2.10.230.10">
    <property type="entry name" value="Heat shock protein DnaJ, cysteine-rich domain"/>
    <property type="match status" value="1"/>
</dbReference>
<dbReference type="Gene3D" id="2.60.260.20">
    <property type="entry name" value="Urease metallochaperone UreE, N-terminal domain"/>
    <property type="match status" value="2"/>
</dbReference>
<dbReference type="HAMAP" id="MF_01152">
    <property type="entry name" value="DnaJ"/>
    <property type="match status" value="1"/>
</dbReference>
<dbReference type="InterPro" id="IPR012724">
    <property type="entry name" value="DnaJ"/>
</dbReference>
<dbReference type="InterPro" id="IPR002939">
    <property type="entry name" value="DnaJ_C"/>
</dbReference>
<dbReference type="InterPro" id="IPR001623">
    <property type="entry name" value="DnaJ_domain"/>
</dbReference>
<dbReference type="InterPro" id="IPR018253">
    <property type="entry name" value="DnaJ_domain_CS"/>
</dbReference>
<dbReference type="InterPro" id="IPR008971">
    <property type="entry name" value="HSP40/DnaJ_pept-bd"/>
</dbReference>
<dbReference type="InterPro" id="IPR001305">
    <property type="entry name" value="HSP_DnaJ_Cys-rich_dom"/>
</dbReference>
<dbReference type="InterPro" id="IPR036410">
    <property type="entry name" value="HSP_DnaJ_Cys-rich_dom_sf"/>
</dbReference>
<dbReference type="InterPro" id="IPR036869">
    <property type="entry name" value="J_dom_sf"/>
</dbReference>
<dbReference type="NCBIfam" id="TIGR02349">
    <property type="entry name" value="DnaJ_bact"/>
    <property type="match status" value="1"/>
</dbReference>
<dbReference type="NCBIfam" id="NF008035">
    <property type="entry name" value="PRK10767.1"/>
    <property type="match status" value="1"/>
</dbReference>
<dbReference type="PANTHER" id="PTHR43096:SF48">
    <property type="entry name" value="CHAPERONE PROTEIN DNAJ"/>
    <property type="match status" value="1"/>
</dbReference>
<dbReference type="PANTHER" id="PTHR43096">
    <property type="entry name" value="DNAJ HOMOLOG 1, MITOCHONDRIAL-RELATED"/>
    <property type="match status" value="1"/>
</dbReference>
<dbReference type="Pfam" id="PF00226">
    <property type="entry name" value="DnaJ"/>
    <property type="match status" value="1"/>
</dbReference>
<dbReference type="Pfam" id="PF01556">
    <property type="entry name" value="DnaJ_C"/>
    <property type="match status" value="1"/>
</dbReference>
<dbReference type="Pfam" id="PF00684">
    <property type="entry name" value="DnaJ_CXXCXGXG"/>
    <property type="match status" value="1"/>
</dbReference>
<dbReference type="PRINTS" id="PR00625">
    <property type="entry name" value="JDOMAIN"/>
</dbReference>
<dbReference type="SMART" id="SM00271">
    <property type="entry name" value="DnaJ"/>
    <property type="match status" value="1"/>
</dbReference>
<dbReference type="SUPFAM" id="SSF46565">
    <property type="entry name" value="Chaperone J-domain"/>
    <property type="match status" value="1"/>
</dbReference>
<dbReference type="SUPFAM" id="SSF57938">
    <property type="entry name" value="DnaJ/Hsp40 cysteine-rich domain"/>
    <property type="match status" value="1"/>
</dbReference>
<dbReference type="SUPFAM" id="SSF49493">
    <property type="entry name" value="HSP40/DnaJ peptide-binding domain"/>
    <property type="match status" value="2"/>
</dbReference>
<dbReference type="PROSITE" id="PS00636">
    <property type="entry name" value="DNAJ_1"/>
    <property type="match status" value="1"/>
</dbReference>
<dbReference type="PROSITE" id="PS50076">
    <property type="entry name" value="DNAJ_2"/>
    <property type="match status" value="1"/>
</dbReference>
<dbReference type="PROSITE" id="PS51188">
    <property type="entry name" value="ZF_CR"/>
    <property type="match status" value="1"/>
</dbReference>
<accession>B1XBE0</accession>
<feature type="chain" id="PRO_1000137686" description="Chaperone protein DnaJ">
    <location>
        <begin position="1"/>
        <end position="376"/>
    </location>
</feature>
<feature type="domain" description="J" evidence="1">
    <location>
        <begin position="5"/>
        <end position="70"/>
    </location>
</feature>
<feature type="repeat" description="CXXCXGXG motif">
    <location>
        <begin position="144"/>
        <end position="151"/>
    </location>
</feature>
<feature type="repeat" description="CXXCXGXG motif">
    <location>
        <begin position="161"/>
        <end position="168"/>
    </location>
</feature>
<feature type="repeat" description="CXXCXGXG motif">
    <location>
        <begin position="183"/>
        <end position="190"/>
    </location>
</feature>
<feature type="repeat" description="CXXCXGXG motif">
    <location>
        <begin position="197"/>
        <end position="204"/>
    </location>
</feature>
<feature type="zinc finger region" description="CR-type" evidence="1">
    <location>
        <begin position="131"/>
        <end position="209"/>
    </location>
</feature>
<feature type="binding site" evidence="1">
    <location>
        <position position="144"/>
    </location>
    <ligand>
        <name>Zn(2+)</name>
        <dbReference type="ChEBI" id="CHEBI:29105"/>
        <label>1</label>
    </ligand>
</feature>
<feature type="binding site" evidence="1">
    <location>
        <position position="147"/>
    </location>
    <ligand>
        <name>Zn(2+)</name>
        <dbReference type="ChEBI" id="CHEBI:29105"/>
        <label>1</label>
    </ligand>
</feature>
<feature type="binding site" evidence="1">
    <location>
        <position position="161"/>
    </location>
    <ligand>
        <name>Zn(2+)</name>
        <dbReference type="ChEBI" id="CHEBI:29105"/>
        <label>2</label>
    </ligand>
</feature>
<feature type="binding site" evidence="1">
    <location>
        <position position="164"/>
    </location>
    <ligand>
        <name>Zn(2+)</name>
        <dbReference type="ChEBI" id="CHEBI:29105"/>
        <label>2</label>
    </ligand>
</feature>
<feature type="binding site" evidence="1">
    <location>
        <position position="183"/>
    </location>
    <ligand>
        <name>Zn(2+)</name>
        <dbReference type="ChEBI" id="CHEBI:29105"/>
        <label>2</label>
    </ligand>
</feature>
<feature type="binding site" evidence="1">
    <location>
        <position position="186"/>
    </location>
    <ligand>
        <name>Zn(2+)</name>
        <dbReference type="ChEBI" id="CHEBI:29105"/>
        <label>2</label>
    </ligand>
</feature>
<feature type="binding site" evidence="1">
    <location>
        <position position="197"/>
    </location>
    <ligand>
        <name>Zn(2+)</name>
        <dbReference type="ChEBI" id="CHEBI:29105"/>
        <label>1</label>
    </ligand>
</feature>
<feature type="binding site" evidence="1">
    <location>
        <position position="200"/>
    </location>
    <ligand>
        <name>Zn(2+)</name>
        <dbReference type="ChEBI" id="CHEBI:29105"/>
        <label>1</label>
    </ligand>
</feature>
<reference key="1">
    <citation type="journal article" date="2008" name="J. Bacteriol.">
        <title>The complete genome sequence of Escherichia coli DH10B: insights into the biology of a laboratory workhorse.</title>
        <authorList>
            <person name="Durfee T."/>
            <person name="Nelson R."/>
            <person name="Baldwin S."/>
            <person name="Plunkett G. III"/>
            <person name="Burland V."/>
            <person name="Mau B."/>
            <person name="Petrosino J.F."/>
            <person name="Qin X."/>
            <person name="Muzny D.M."/>
            <person name="Ayele M."/>
            <person name="Gibbs R.A."/>
            <person name="Csorgo B."/>
            <person name="Posfai G."/>
            <person name="Weinstock G.M."/>
            <person name="Blattner F.R."/>
        </authorList>
    </citation>
    <scope>NUCLEOTIDE SEQUENCE [LARGE SCALE GENOMIC DNA]</scope>
    <source>
        <strain>K12 / DH10B</strain>
    </source>
</reference>
<evidence type="ECO:0000255" key="1">
    <source>
        <dbReference type="HAMAP-Rule" id="MF_01152"/>
    </source>
</evidence>
<protein>
    <recommendedName>
        <fullName evidence="1">Chaperone protein DnaJ</fullName>
    </recommendedName>
</protein>